<organism>
    <name type="scientific">Escherichia coli O7:K1 (strain IAI39 / ExPEC)</name>
    <dbReference type="NCBI Taxonomy" id="585057"/>
    <lineage>
        <taxon>Bacteria</taxon>
        <taxon>Pseudomonadati</taxon>
        <taxon>Pseudomonadota</taxon>
        <taxon>Gammaproteobacteria</taxon>
        <taxon>Enterobacterales</taxon>
        <taxon>Enterobacteriaceae</taxon>
        <taxon>Escherichia</taxon>
    </lineage>
</organism>
<comment type="function">
    <text evidence="1">Provides the cells with the ability to utilize trehalose at high osmolarity by splitting it into glucose molecules that can subsequently be taken up by the phosphotransferase-mediated uptake system.</text>
</comment>
<comment type="catalytic activity">
    <reaction evidence="1">
        <text>alpha,alpha-trehalose + H2O = alpha-D-glucose + beta-D-glucose</text>
        <dbReference type="Rhea" id="RHEA:32675"/>
        <dbReference type="ChEBI" id="CHEBI:15377"/>
        <dbReference type="ChEBI" id="CHEBI:15903"/>
        <dbReference type="ChEBI" id="CHEBI:16551"/>
        <dbReference type="ChEBI" id="CHEBI:17925"/>
        <dbReference type="EC" id="3.2.1.28"/>
    </reaction>
</comment>
<comment type="subunit">
    <text evidence="1">Monomer.</text>
</comment>
<comment type="subcellular location">
    <subcellularLocation>
        <location evidence="1">Periplasm</location>
    </subcellularLocation>
</comment>
<comment type="similarity">
    <text evidence="1">Belongs to the glycosyl hydrolase 37 family.</text>
</comment>
<keyword id="KW-0326">Glycosidase</keyword>
<keyword id="KW-0378">Hydrolase</keyword>
<keyword id="KW-0574">Periplasm</keyword>
<keyword id="KW-0732">Signal</keyword>
<protein>
    <recommendedName>
        <fullName evidence="1">Periplasmic trehalase</fullName>
        <ecNumber evidence="1">3.2.1.28</ecNumber>
    </recommendedName>
    <alternativeName>
        <fullName evidence="1">Alpha,alpha-trehalase</fullName>
    </alternativeName>
    <alternativeName>
        <fullName evidence="1">Alpha,alpha-trehalose glucohydrolase</fullName>
    </alternativeName>
</protein>
<reference key="1">
    <citation type="journal article" date="2009" name="PLoS Genet.">
        <title>Organised genome dynamics in the Escherichia coli species results in highly diverse adaptive paths.</title>
        <authorList>
            <person name="Touchon M."/>
            <person name="Hoede C."/>
            <person name="Tenaillon O."/>
            <person name="Barbe V."/>
            <person name="Baeriswyl S."/>
            <person name="Bidet P."/>
            <person name="Bingen E."/>
            <person name="Bonacorsi S."/>
            <person name="Bouchier C."/>
            <person name="Bouvet O."/>
            <person name="Calteau A."/>
            <person name="Chiapello H."/>
            <person name="Clermont O."/>
            <person name="Cruveiller S."/>
            <person name="Danchin A."/>
            <person name="Diard M."/>
            <person name="Dossat C."/>
            <person name="Karoui M.E."/>
            <person name="Frapy E."/>
            <person name="Garry L."/>
            <person name="Ghigo J.M."/>
            <person name="Gilles A.M."/>
            <person name="Johnson J."/>
            <person name="Le Bouguenec C."/>
            <person name="Lescat M."/>
            <person name="Mangenot S."/>
            <person name="Martinez-Jehanne V."/>
            <person name="Matic I."/>
            <person name="Nassif X."/>
            <person name="Oztas S."/>
            <person name="Petit M.A."/>
            <person name="Pichon C."/>
            <person name="Rouy Z."/>
            <person name="Ruf C.S."/>
            <person name="Schneider D."/>
            <person name="Tourret J."/>
            <person name="Vacherie B."/>
            <person name="Vallenet D."/>
            <person name="Medigue C."/>
            <person name="Rocha E.P.C."/>
            <person name="Denamur E."/>
        </authorList>
    </citation>
    <scope>NUCLEOTIDE SEQUENCE [LARGE SCALE GENOMIC DNA]</scope>
    <source>
        <strain>IAI39 / ExPEC</strain>
    </source>
</reference>
<sequence>MKSPTPSRPQKMALIPACIFLCFAALSVQAEETSVTPQPPDILLGPLFNDVQNAKLFPDQKTFADAVPNSDPLMILADYRMQQNQSGFDLRHFVNVNFTLPKEGEKYVPPEGQSLREHIDGLWPVLTRSTENTEKWDSLLPLPEPYVVPGGRFREVYYWDSYFTMLGLAESGHWDKVADMVANFAHEIDTYGHIPNGNRSYYLSRSQPPFFALMVELLAQHEGDAALKQYLPQMQKEYAYWMDGVENLQAGQQEKRVVKLQDGTLLNRYWDDRDTPRPESWVEDIATAKSNPNRPATEIYRDLRSAAASGWDFSSRWMDNPQQLNTLRTTSIVPVDLNSLMFKMEKILARASKAAGDNAMANQYETLANARQKGIEKYLWNDQQGWYADYDLKSHKVRNQLTAAALFPLYVNAAAKDRASKMATATKTHLLQPGGLNTTSVKSGQQWDAPNGWAPLQWVATEGLQNYGQKEVAMDISWHFLTNVQHTYDREKKLVEKYDVSATGTGGGGGEYPLQDGFGWTNGVTLKMLDLICPKEQPCDNVPATRPLSESTTQPLKQKEAEPTP</sequence>
<dbReference type="EC" id="3.2.1.28" evidence="1"/>
<dbReference type="EMBL" id="CU928164">
    <property type="protein sequence ID" value="CAR17665.1"/>
    <property type="molecule type" value="Genomic_DNA"/>
</dbReference>
<dbReference type="RefSeq" id="WP_000841923.1">
    <property type="nucleotide sequence ID" value="NC_011750.1"/>
</dbReference>
<dbReference type="RefSeq" id="YP_002407533.1">
    <property type="nucleotide sequence ID" value="NC_011750.1"/>
</dbReference>
<dbReference type="SMR" id="B7NUW3"/>
<dbReference type="STRING" id="585057.ECIAI39_1533"/>
<dbReference type="CAZy" id="GH37">
    <property type="family name" value="Glycoside Hydrolase Family 37"/>
</dbReference>
<dbReference type="KEGG" id="ect:ECIAI39_1533"/>
<dbReference type="PATRIC" id="fig|585057.6.peg.1602"/>
<dbReference type="HOGENOM" id="CLU_006451_3_1_6"/>
<dbReference type="Proteomes" id="UP000000749">
    <property type="component" value="Chromosome"/>
</dbReference>
<dbReference type="GO" id="GO:0042597">
    <property type="term" value="C:periplasmic space"/>
    <property type="evidence" value="ECO:0007669"/>
    <property type="project" value="UniProtKB-SubCell"/>
</dbReference>
<dbReference type="GO" id="GO:0004555">
    <property type="term" value="F:alpha,alpha-trehalase activity"/>
    <property type="evidence" value="ECO:0007669"/>
    <property type="project" value="UniProtKB-UniRule"/>
</dbReference>
<dbReference type="GO" id="GO:0071474">
    <property type="term" value="P:cellular hyperosmotic response"/>
    <property type="evidence" value="ECO:0007669"/>
    <property type="project" value="InterPro"/>
</dbReference>
<dbReference type="GO" id="GO:0005993">
    <property type="term" value="P:trehalose catabolic process"/>
    <property type="evidence" value="ECO:0007669"/>
    <property type="project" value="InterPro"/>
</dbReference>
<dbReference type="FunFam" id="1.50.10.10:FF:000003">
    <property type="entry name" value="Cytoplasmic trehalase"/>
    <property type="match status" value="1"/>
</dbReference>
<dbReference type="Gene3D" id="1.50.10.10">
    <property type="match status" value="1"/>
</dbReference>
<dbReference type="HAMAP" id="MF_01060">
    <property type="entry name" value="Peripl_trehalase"/>
    <property type="match status" value="1"/>
</dbReference>
<dbReference type="InterPro" id="IPR008928">
    <property type="entry name" value="6-hairpin_glycosidase_sf"/>
</dbReference>
<dbReference type="InterPro" id="IPR012341">
    <property type="entry name" value="6hp_glycosidase-like_sf"/>
</dbReference>
<dbReference type="InterPro" id="IPR001661">
    <property type="entry name" value="Glyco_hydro_37"/>
</dbReference>
<dbReference type="InterPro" id="IPR018232">
    <property type="entry name" value="Glyco_hydro_37_CS"/>
</dbReference>
<dbReference type="InterPro" id="IPR023720">
    <property type="entry name" value="Trehalase_periplasmic"/>
</dbReference>
<dbReference type="NCBIfam" id="NF009773">
    <property type="entry name" value="PRK13270.1"/>
    <property type="match status" value="1"/>
</dbReference>
<dbReference type="NCBIfam" id="NF009774">
    <property type="entry name" value="PRK13271.1"/>
    <property type="match status" value="1"/>
</dbReference>
<dbReference type="PANTHER" id="PTHR23403">
    <property type="entry name" value="TREHALASE"/>
    <property type="match status" value="1"/>
</dbReference>
<dbReference type="PANTHER" id="PTHR23403:SF1">
    <property type="entry name" value="TREHALASE"/>
    <property type="match status" value="1"/>
</dbReference>
<dbReference type="Pfam" id="PF01204">
    <property type="entry name" value="Trehalase"/>
    <property type="match status" value="1"/>
</dbReference>
<dbReference type="PRINTS" id="PR00744">
    <property type="entry name" value="GLHYDRLASE37"/>
</dbReference>
<dbReference type="SUPFAM" id="SSF48208">
    <property type="entry name" value="Six-hairpin glycosidases"/>
    <property type="match status" value="1"/>
</dbReference>
<dbReference type="PROSITE" id="PS00927">
    <property type="entry name" value="TREHALASE_1"/>
    <property type="match status" value="1"/>
</dbReference>
<dbReference type="PROSITE" id="PS00928">
    <property type="entry name" value="TREHALASE_2"/>
    <property type="match status" value="1"/>
</dbReference>
<proteinExistence type="inferred from homology"/>
<evidence type="ECO:0000255" key="1">
    <source>
        <dbReference type="HAMAP-Rule" id="MF_01060"/>
    </source>
</evidence>
<evidence type="ECO:0000256" key="2">
    <source>
        <dbReference type="SAM" id="MobiDB-lite"/>
    </source>
</evidence>
<name>TREA_ECO7I</name>
<gene>
    <name evidence="1" type="primary">treA</name>
    <name type="ordered locus">ECIAI39_1533</name>
</gene>
<feature type="signal peptide" evidence="1">
    <location>
        <begin position="1"/>
        <end position="30"/>
    </location>
</feature>
<feature type="chain" id="PRO_1000136417" description="Periplasmic trehalase">
    <location>
        <begin position="31"/>
        <end position="565"/>
    </location>
</feature>
<feature type="region of interest" description="Disordered" evidence="2">
    <location>
        <begin position="539"/>
        <end position="565"/>
    </location>
</feature>
<feature type="active site" description="Proton donor/acceptor" evidence="1">
    <location>
        <position position="312"/>
    </location>
</feature>
<feature type="active site" description="Proton donor/acceptor" evidence="1">
    <location>
        <position position="496"/>
    </location>
</feature>
<feature type="binding site" evidence="1">
    <location>
        <position position="152"/>
    </location>
    <ligand>
        <name>substrate</name>
    </ligand>
</feature>
<feature type="binding site" evidence="1">
    <location>
        <begin position="159"/>
        <end position="160"/>
    </location>
    <ligand>
        <name>substrate</name>
    </ligand>
</feature>
<feature type="binding site" evidence="1">
    <location>
        <position position="196"/>
    </location>
    <ligand>
        <name>substrate</name>
    </ligand>
</feature>
<feature type="binding site" evidence="1">
    <location>
        <begin position="205"/>
        <end position="207"/>
    </location>
    <ligand>
        <name>substrate</name>
    </ligand>
</feature>
<feature type="binding site" evidence="1">
    <location>
        <begin position="277"/>
        <end position="279"/>
    </location>
    <ligand>
        <name>substrate</name>
    </ligand>
</feature>
<feature type="binding site" evidence="1">
    <location>
        <position position="310"/>
    </location>
    <ligand>
        <name>substrate</name>
    </ligand>
</feature>
<feature type="binding site" evidence="1">
    <location>
        <position position="511"/>
    </location>
    <ligand>
        <name>substrate</name>
    </ligand>
</feature>
<accession>B7NUW3</accession>